<name>Y3480_MYCTU</name>
<proteinExistence type="evidence at protein level"/>
<gene>
    <name type="ordered locus">Rv3480c</name>
    <name type="ORF">MTCY13E12.33c</name>
</gene>
<sequence length="497" mass="53315">MSQTARRLGPQDMFFLYSESSTTMMHVGALMPFTPPSGAPPDLLRQLVDESKASEVVEPWSLRLSHPELLYHPTQSWVVDDNFDLDYHVRRSALASPGDERELGIPVSRLHSHALDLRRPPWEVHFIEGLEGGRFAIYIKMHHSLIDGYTGQKMLARSLSTDPHDTTHPLFFNIPTPGRSPADTQDSVGGGLIAGAGNVLDGLGDVVRGLGGLVSGVGSVLGSVAGAGRSTFELTKALVNAQLRSDHEYRNLVGSVQAPHCILNTRISRNRRFATQQYPLDRLKAIGAQYDATINDVALAIIGGGLRRFLDELGELPNKSLIVVLPVNVRPKDDEGGGNAVATILATLGTDVADPVQRLAAVTASTRAAKAQLRSMDKDAILAYSAALMAPYGVQLASTLSGVKPPWPYTFNLCVSNVPGPEDVLYLRGSRMEASYPVSLVAHSQALNVTLQSYAGTLNFGFIGCRDTLPHLQRLAVYTGEALDQLAAADGAAGLGS</sequence>
<reference key="1">
    <citation type="journal article" date="1998" name="Nature">
        <title>Deciphering the biology of Mycobacterium tuberculosis from the complete genome sequence.</title>
        <authorList>
            <person name="Cole S.T."/>
            <person name="Brosch R."/>
            <person name="Parkhill J."/>
            <person name="Garnier T."/>
            <person name="Churcher C.M."/>
            <person name="Harris D.E."/>
            <person name="Gordon S.V."/>
            <person name="Eiglmeier K."/>
            <person name="Gas S."/>
            <person name="Barry C.E. III"/>
            <person name="Tekaia F."/>
            <person name="Badcock K."/>
            <person name="Basham D."/>
            <person name="Brown D."/>
            <person name="Chillingworth T."/>
            <person name="Connor R."/>
            <person name="Davies R.M."/>
            <person name="Devlin K."/>
            <person name="Feltwell T."/>
            <person name="Gentles S."/>
            <person name="Hamlin N."/>
            <person name="Holroyd S."/>
            <person name="Hornsby T."/>
            <person name="Jagels K."/>
            <person name="Krogh A."/>
            <person name="McLean J."/>
            <person name="Moule S."/>
            <person name="Murphy L.D."/>
            <person name="Oliver S."/>
            <person name="Osborne J."/>
            <person name="Quail M.A."/>
            <person name="Rajandream M.A."/>
            <person name="Rogers J."/>
            <person name="Rutter S."/>
            <person name="Seeger K."/>
            <person name="Skelton S."/>
            <person name="Squares S."/>
            <person name="Squares R."/>
            <person name="Sulston J.E."/>
            <person name="Taylor K."/>
            <person name="Whitehead S."/>
            <person name="Barrell B.G."/>
        </authorList>
    </citation>
    <scope>NUCLEOTIDE SEQUENCE [LARGE SCALE GENOMIC DNA]</scope>
    <source>
        <strain>ATCC 25618 / H37Rv</strain>
    </source>
</reference>
<reference key="2">
    <citation type="journal article" date="2004" name="J. Bacteriol.">
        <title>Induction of a novel class of diacylglycerol acyltransferases and triacylglycerol accumulation in Mycobacterium tuberculosis as it goes into a dormancy-like state in culture.</title>
        <authorList>
            <person name="Daniel J."/>
            <person name="Deb C."/>
            <person name="Dubey V.S."/>
            <person name="Sirakova T.D."/>
            <person name="Abomoelak B."/>
            <person name="Morbidoni H.R."/>
            <person name="Kolattukudy P.E."/>
        </authorList>
    </citation>
    <scope>EXPRESSION IN E.COLI</scope>
    <scope>CATALYTIC ACTIVITY</scope>
    <scope>INDUCTION</scope>
    <source>
        <strain>ATCC 25618 / H37Rv</strain>
    </source>
</reference>
<reference key="3">
    <citation type="journal article" date="2011" name="Mol. Cell. Proteomics">
        <title>Proteogenomic analysis of Mycobacterium tuberculosis by high resolution mass spectrometry.</title>
        <authorList>
            <person name="Kelkar D.S."/>
            <person name="Kumar D."/>
            <person name="Kumar P."/>
            <person name="Balakrishnan L."/>
            <person name="Muthusamy B."/>
            <person name="Yadav A.K."/>
            <person name="Shrivastava P."/>
            <person name="Marimuthu A."/>
            <person name="Anand S."/>
            <person name="Sundaram H."/>
            <person name="Kingsbury R."/>
            <person name="Harsha H.C."/>
            <person name="Nair B."/>
            <person name="Prasad T.S."/>
            <person name="Chauhan D.S."/>
            <person name="Katoch K."/>
            <person name="Katoch V.M."/>
            <person name="Kumar P."/>
            <person name="Chaerkady R."/>
            <person name="Ramachandran S."/>
            <person name="Dash D."/>
            <person name="Pandey A."/>
        </authorList>
    </citation>
    <scope>IDENTIFICATION BY MASS SPECTROMETRY [LARGE SCALE ANALYSIS]</scope>
    <source>
        <strain>ATCC 25618 / H37Rv</strain>
    </source>
</reference>
<accession>P9WKA7</accession>
<accession>L0TE90</accession>
<accession>O06343</accession>
<feature type="chain" id="PRO_0000222920" description="Putative diacyglycerol O-acyltransferase Rv3480c">
    <location>
        <begin position="1"/>
        <end position="497"/>
    </location>
</feature>
<feature type="active site" description="Proton acceptor" evidence="1">
    <location>
        <position position="143"/>
    </location>
</feature>
<dbReference type="EC" id="2.3.1.20" evidence="2"/>
<dbReference type="EMBL" id="AL123456">
    <property type="protein sequence ID" value="CCP46302.1"/>
    <property type="molecule type" value="Genomic_DNA"/>
</dbReference>
<dbReference type="PIR" id="E70568">
    <property type="entry name" value="E70568"/>
</dbReference>
<dbReference type="RefSeq" id="NP_217997.1">
    <property type="nucleotide sequence ID" value="NC_000962.3"/>
</dbReference>
<dbReference type="RefSeq" id="WP_003418921.1">
    <property type="nucleotide sequence ID" value="NZ_NVQJ01000042.1"/>
</dbReference>
<dbReference type="SMR" id="P9WKA7"/>
<dbReference type="STRING" id="83332.Rv3480c"/>
<dbReference type="SwissLipids" id="SLP:000001153"/>
<dbReference type="PaxDb" id="83332-Rv3480c"/>
<dbReference type="GeneID" id="888473"/>
<dbReference type="KEGG" id="mtu:Rv3480c"/>
<dbReference type="KEGG" id="mtv:RVBD_3480c"/>
<dbReference type="TubercuList" id="Rv3480c"/>
<dbReference type="eggNOG" id="COG1020">
    <property type="taxonomic scope" value="Bacteria"/>
</dbReference>
<dbReference type="InParanoid" id="P9WKA7"/>
<dbReference type="OrthoDB" id="9810950at2"/>
<dbReference type="PhylomeDB" id="P9WKA7"/>
<dbReference type="UniPathway" id="UPA00282"/>
<dbReference type="Proteomes" id="UP000001584">
    <property type="component" value="Chromosome"/>
</dbReference>
<dbReference type="GO" id="GO:0005886">
    <property type="term" value="C:plasma membrane"/>
    <property type="evidence" value="ECO:0000318"/>
    <property type="project" value="GO_Central"/>
</dbReference>
<dbReference type="GO" id="GO:0004144">
    <property type="term" value="F:diacylglycerol O-acyltransferase activity"/>
    <property type="evidence" value="ECO:0007669"/>
    <property type="project" value="UniProtKB-EC"/>
</dbReference>
<dbReference type="GO" id="GO:0047196">
    <property type="term" value="F:long-chain-alcohol O-fatty-acyltransferase activity"/>
    <property type="evidence" value="ECO:0000314"/>
    <property type="project" value="MTBBASE"/>
</dbReference>
<dbReference type="GO" id="GO:0008374">
    <property type="term" value="F:O-acyltransferase activity"/>
    <property type="evidence" value="ECO:0000318"/>
    <property type="project" value="GO_Central"/>
</dbReference>
<dbReference type="GO" id="GO:0051701">
    <property type="term" value="P:biological process involved in interaction with host"/>
    <property type="evidence" value="ECO:0000318"/>
    <property type="project" value="GO_Central"/>
</dbReference>
<dbReference type="GO" id="GO:0006071">
    <property type="term" value="P:glycerol metabolic process"/>
    <property type="evidence" value="ECO:0007669"/>
    <property type="project" value="UniProtKB-KW"/>
</dbReference>
<dbReference type="GO" id="GO:0045017">
    <property type="term" value="P:glycerolipid biosynthetic process"/>
    <property type="evidence" value="ECO:0000314"/>
    <property type="project" value="MTBBASE"/>
</dbReference>
<dbReference type="GO" id="GO:0001666">
    <property type="term" value="P:response to hypoxia"/>
    <property type="evidence" value="ECO:0000318"/>
    <property type="project" value="GO_Central"/>
</dbReference>
<dbReference type="GO" id="GO:0071731">
    <property type="term" value="P:response to nitric oxide"/>
    <property type="evidence" value="ECO:0000318"/>
    <property type="project" value="GO_Central"/>
</dbReference>
<dbReference type="GO" id="GO:0019432">
    <property type="term" value="P:triglyceride biosynthetic process"/>
    <property type="evidence" value="ECO:0000318"/>
    <property type="project" value="GO_Central"/>
</dbReference>
<dbReference type="InterPro" id="IPR014292">
    <property type="entry name" value="Acyl_transf_WS/DGAT"/>
</dbReference>
<dbReference type="InterPro" id="IPR045034">
    <property type="entry name" value="O-acyltransferase_WSD1-like"/>
</dbReference>
<dbReference type="InterPro" id="IPR009721">
    <property type="entry name" value="O-acyltransferase_WSD1_C"/>
</dbReference>
<dbReference type="InterPro" id="IPR004255">
    <property type="entry name" value="O-acyltransferase_WSD1_N"/>
</dbReference>
<dbReference type="NCBIfam" id="TIGR02946">
    <property type="entry name" value="acyl_WS_DGAT"/>
    <property type="match status" value="1"/>
</dbReference>
<dbReference type="PANTHER" id="PTHR31650">
    <property type="entry name" value="O-ACYLTRANSFERASE (WSD1-LIKE) FAMILY PROTEIN"/>
    <property type="match status" value="1"/>
</dbReference>
<dbReference type="PANTHER" id="PTHR31650:SF1">
    <property type="entry name" value="WAX ESTER SYNTHASE_DIACYLGLYCEROL ACYLTRANSFERASE 4-RELATED"/>
    <property type="match status" value="1"/>
</dbReference>
<dbReference type="Pfam" id="PF06974">
    <property type="entry name" value="WS_DGAT_C"/>
    <property type="match status" value="1"/>
</dbReference>
<dbReference type="Pfam" id="PF03007">
    <property type="entry name" value="WS_DGAT_cat"/>
    <property type="match status" value="1"/>
</dbReference>
<dbReference type="SUPFAM" id="SSF52777">
    <property type="entry name" value="CoA-dependent acyltransferases"/>
    <property type="match status" value="1"/>
</dbReference>
<comment type="function">
    <text>Upon expression in E.coli has a weak triacylglycerol synthase function, making triacylglycerol (TG) from diolein and long-chain fatty acyl-CoA. Also functions weakly as a wax synthase, as it incorporates palmityl alcohol into wax esters in the presence of palmitoyl-CoA.</text>
</comment>
<comment type="catalytic activity">
    <reaction evidence="2">
        <text>an acyl-CoA + a 1,2-diacyl-sn-glycerol = a triacyl-sn-glycerol + CoA</text>
        <dbReference type="Rhea" id="RHEA:10868"/>
        <dbReference type="ChEBI" id="CHEBI:17815"/>
        <dbReference type="ChEBI" id="CHEBI:57287"/>
        <dbReference type="ChEBI" id="CHEBI:58342"/>
        <dbReference type="ChEBI" id="CHEBI:64615"/>
        <dbReference type="EC" id="2.3.1.20"/>
    </reaction>
</comment>
<comment type="catalytic activity">
    <reaction evidence="2">
        <text>di-(9Z)-octadecenoylglycerol + (9Z)-octadecenoyl-CoA = 1,2,3-tri-(9Z-octadecenoyl)-glycerol + CoA</text>
        <dbReference type="Rhea" id="RHEA:45780"/>
        <dbReference type="ChEBI" id="CHEBI:53753"/>
        <dbReference type="ChEBI" id="CHEBI:57287"/>
        <dbReference type="ChEBI" id="CHEBI:57387"/>
        <dbReference type="ChEBI" id="CHEBI:75945"/>
    </reaction>
    <physiologicalReaction direction="left-to-right" evidence="2">
        <dbReference type="Rhea" id="RHEA:45781"/>
    </physiologicalReaction>
</comment>
<comment type="catalytic activity">
    <reaction evidence="2">
        <text>hexadecan-1-ol + hexadecanoyl-CoA = hexadecanyl hexadecanoate + CoA</text>
        <dbReference type="Rhea" id="RHEA:38167"/>
        <dbReference type="ChEBI" id="CHEBI:16125"/>
        <dbReference type="ChEBI" id="CHEBI:57287"/>
        <dbReference type="ChEBI" id="CHEBI:57379"/>
        <dbReference type="ChEBI" id="CHEBI:75584"/>
    </reaction>
    <physiologicalReaction direction="left-to-right" evidence="2">
        <dbReference type="Rhea" id="RHEA:38168"/>
    </physiologicalReaction>
</comment>
<comment type="pathway">
    <text>Glycerolipid metabolism; triacylglycerol biosynthesis.</text>
</comment>
<comment type="induction">
    <text evidence="2">Constitutively expressed at a low level, it is not further induced by hypoxia or nitric oxide exposure.</text>
</comment>
<comment type="similarity">
    <text evidence="3">Belongs to the long-chain O-acyltransferase family.</text>
</comment>
<protein>
    <recommendedName>
        <fullName>Putative diacyglycerol O-acyltransferase Rv3480c</fullName>
        <ecNumber evidence="2">2.3.1.20</ecNumber>
    </recommendedName>
    <alternativeName>
        <fullName>Putative triacylglycerol synthase Rv3480c</fullName>
    </alternativeName>
</protein>
<keyword id="KW-0012">Acyltransferase</keyword>
<keyword id="KW-0319">Glycerol metabolism</keyword>
<keyword id="KW-0444">Lipid biosynthesis</keyword>
<keyword id="KW-0443">Lipid metabolism</keyword>
<keyword id="KW-1185">Reference proteome</keyword>
<keyword id="KW-0808">Transferase</keyword>
<evidence type="ECO:0000255" key="1"/>
<evidence type="ECO:0000269" key="2">
    <source>
    </source>
</evidence>
<evidence type="ECO:0000305" key="3"/>
<organism>
    <name type="scientific">Mycobacterium tuberculosis (strain ATCC 25618 / H37Rv)</name>
    <dbReference type="NCBI Taxonomy" id="83332"/>
    <lineage>
        <taxon>Bacteria</taxon>
        <taxon>Bacillati</taxon>
        <taxon>Actinomycetota</taxon>
        <taxon>Actinomycetes</taxon>
        <taxon>Mycobacteriales</taxon>
        <taxon>Mycobacteriaceae</taxon>
        <taxon>Mycobacterium</taxon>
        <taxon>Mycobacterium tuberculosis complex</taxon>
    </lineage>
</organism>